<feature type="chain" id="PRO_0000242114" description="Arginine--tRNA ligase">
    <location>
        <begin position="1"/>
        <end position="592"/>
    </location>
</feature>
<feature type="short sequence motif" description="'HIGH' region">
    <location>
        <begin position="128"/>
        <end position="138"/>
    </location>
</feature>
<name>SYR_HYDCU</name>
<comment type="catalytic activity">
    <reaction evidence="1">
        <text>tRNA(Arg) + L-arginine + ATP = L-arginyl-tRNA(Arg) + AMP + diphosphate</text>
        <dbReference type="Rhea" id="RHEA:20301"/>
        <dbReference type="Rhea" id="RHEA-COMP:9658"/>
        <dbReference type="Rhea" id="RHEA-COMP:9673"/>
        <dbReference type="ChEBI" id="CHEBI:30616"/>
        <dbReference type="ChEBI" id="CHEBI:32682"/>
        <dbReference type="ChEBI" id="CHEBI:33019"/>
        <dbReference type="ChEBI" id="CHEBI:78442"/>
        <dbReference type="ChEBI" id="CHEBI:78513"/>
        <dbReference type="ChEBI" id="CHEBI:456215"/>
        <dbReference type="EC" id="6.1.1.19"/>
    </reaction>
</comment>
<comment type="subunit">
    <text evidence="1">Monomer.</text>
</comment>
<comment type="subcellular location">
    <subcellularLocation>
        <location evidence="1">Cytoplasm</location>
    </subcellularLocation>
</comment>
<comment type="similarity">
    <text evidence="1">Belongs to the class-I aminoacyl-tRNA synthetase family.</text>
</comment>
<proteinExistence type="inferred from homology"/>
<evidence type="ECO:0000255" key="1">
    <source>
        <dbReference type="HAMAP-Rule" id="MF_00123"/>
    </source>
</evidence>
<organism>
    <name type="scientific">Hydrogenovibrio crunogenus (strain DSM 25203 / XCL-2)</name>
    <name type="common">Thiomicrospira crunogena</name>
    <dbReference type="NCBI Taxonomy" id="317025"/>
    <lineage>
        <taxon>Bacteria</taxon>
        <taxon>Pseudomonadati</taxon>
        <taxon>Pseudomonadota</taxon>
        <taxon>Gammaproteobacteria</taxon>
        <taxon>Thiotrichales</taxon>
        <taxon>Piscirickettsiaceae</taxon>
        <taxon>Hydrogenovibrio</taxon>
    </lineage>
</organism>
<dbReference type="EC" id="6.1.1.19" evidence="1"/>
<dbReference type="EMBL" id="CP000109">
    <property type="protein sequence ID" value="ABB40794.1"/>
    <property type="molecule type" value="Genomic_DNA"/>
</dbReference>
<dbReference type="SMR" id="Q31J79"/>
<dbReference type="STRING" id="317025.Tcr_0198"/>
<dbReference type="KEGG" id="tcx:Tcr_0198"/>
<dbReference type="eggNOG" id="COG0018">
    <property type="taxonomic scope" value="Bacteria"/>
</dbReference>
<dbReference type="HOGENOM" id="CLU_006406_0_1_6"/>
<dbReference type="OrthoDB" id="9803211at2"/>
<dbReference type="GO" id="GO:0005737">
    <property type="term" value="C:cytoplasm"/>
    <property type="evidence" value="ECO:0007669"/>
    <property type="project" value="UniProtKB-SubCell"/>
</dbReference>
<dbReference type="GO" id="GO:0004814">
    <property type="term" value="F:arginine-tRNA ligase activity"/>
    <property type="evidence" value="ECO:0007669"/>
    <property type="project" value="UniProtKB-UniRule"/>
</dbReference>
<dbReference type="GO" id="GO:0005524">
    <property type="term" value="F:ATP binding"/>
    <property type="evidence" value="ECO:0007669"/>
    <property type="project" value="UniProtKB-UniRule"/>
</dbReference>
<dbReference type="GO" id="GO:0006420">
    <property type="term" value="P:arginyl-tRNA aminoacylation"/>
    <property type="evidence" value="ECO:0007669"/>
    <property type="project" value="UniProtKB-UniRule"/>
</dbReference>
<dbReference type="CDD" id="cd07956">
    <property type="entry name" value="Anticodon_Ia_Arg"/>
    <property type="match status" value="1"/>
</dbReference>
<dbReference type="CDD" id="cd00671">
    <property type="entry name" value="ArgRS_core"/>
    <property type="match status" value="1"/>
</dbReference>
<dbReference type="FunFam" id="1.10.730.10:FF:000008">
    <property type="entry name" value="Arginine--tRNA ligase"/>
    <property type="match status" value="1"/>
</dbReference>
<dbReference type="FunFam" id="3.30.1360.70:FF:000003">
    <property type="entry name" value="Arginine--tRNA ligase"/>
    <property type="match status" value="1"/>
</dbReference>
<dbReference type="Gene3D" id="3.30.1360.70">
    <property type="entry name" value="Arginyl tRNA synthetase N-terminal domain"/>
    <property type="match status" value="1"/>
</dbReference>
<dbReference type="Gene3D" id="3.40.50.620">
    <property type="entry name" value="HUPs"/>
    <property type="match status" value="1"/>
</dbReference>
<dbReference type="Gene3D" id="1.10.730.10">
    <property type="entry name" value="Isoleucyl-tRNA Synthetase, Domain 1"/>
    <property type="match status" value="1"/>
</dbReference>
<dbReference type="HAMAP" id="MF_00123">
    <property type="entry name" value="Arg_tRNA_synth"/>
    <property type="match status" value="1"/>
</dbReference>
<dbReference type="InterPro" id="IPR001412">
    <property type="entry name" value="aa-tRNA-synth_I_CS"/>
</dbReference>
<dbReference type="InterPro" id="IPR001278">
    <property type="entry name" value="Arg-tRNA-ligase"/>
</dbReference>
<dbReference type="InterPro" id="IPR005148">
    <property type="entry name" value="Arg-tRNA-synth_N"/>
</dbReference>
<dbReference type="InterPro" id="IPR036695">
    <property type="entry name" value="Arg-tRNA-synth_N_sf"/>
</dbReference>
<dbReference type="InterPro" id="IPR035684">
    <property type="entry name" value="ArgRS_core"/>
</dbReference>
<dbReference type="InterPro" id="IPR008909">
    <property type="entry name" value="DALR_anticod-bd"/>
</dbReference>
<dbReference type="InterPro" id="IPR014729">
    <property type="entry name" value="Rossmann-like_a/b/a_fold"/>
</dbReference>
<dbReference type="InterPro" id="IPR009080">
    <property type="entry name" value="tRNAsynth_Ia_anticodon-bd"/>
</dbReference>
<dbReference type="NCBIfam" id="TIGR00456">
    <property type="entry name" value="argS"/>
    <property type="match status" value="1"/>
</dbReference>
<dbReference type="PANTHER" id="PTHR11956:SF5">
    <property type="entry name" value="ARGININE--TRNA LIGASE, CYTOPLASMIC"/>
    <property type="match status" value="1"/>
</dbReference>
<dbReference type="PANTHER" id="PTHR11956">
    <property type="entry name" value="ARGINYL-TRNA SYNTHETASE"/>
    <property type="match status" value="1"/>
</dbReference>
<dbReference type="Pfam" id="PF03485">
    <property type="entry name" value="Arg_tRNA_synt_N"/>
    <property type="match status" value="1"/>
</dbReference>
<dbReference type="Pfam" id="PF05746">
    <property type="entry name" value="DALR_1"/>
    <property type="match status" value="1"/>
</dbReference>
<dbReference type="Pfam" id="PF00750">
    <property type="entry name" value="tRNA-synt_1d"/>
    <property type="match status" value="1"/>
</dbReference>
<dbReference type="PRINTS" id="PR01038">
    <property type="entry name" value="TRNASYNTHARG"/>
</dbReference>
<dbReference type="SMART" id="SM01016">
    <property type="entry name" value="Arg_tRNA_synt_N"/>
    <property type="match status" value="1"/>
</dbReference>
<dbReference type="SMART" id="SM00836">
    <property type="entry name" value="DALR_1"/>
    <property type="match status" value="1"/>
</dbReference>
<dbReference type="SUPFAM" id="SSF47323">
    <property type="entry name" value="Anticodon-binding domain of a subclass of class I aminoacyl-tRNA synthetases"/>
    <property type="match status" value="1"/>
</dbReference>
<dbReference type="SUPFAM" id="SSF55190">
    <property type="entry name" value="Arginyl-tRNA synthetase (ArgRS), N-terminal 'additional' domain"/>
    <property type="match status" value="1"/>
</dbReference>
<dbReference type="SUPFAM" id="SSF52374">
    <property type="entry name" value="Nucleotidylyl transferase"/>
    <property type="match status" value="1"/>
</dbReference>
<dbReference type="PROSITE" id="PS00178">
    <property type="entry name" value="AA_TRNA_LIGASE_I"/>
    <property type="match status" value="1"/>
</dbReference>
<keyword id="KW-0030">Aminoacyl-tRNA synthetase</keyword>
<keyword id="KW-0067">ATP-binding</keyword>
<keyword id="KW-0963">Cytoplasm</keyword>
<keyword id="KW-0436">Ligase</keyword>
<keyword id="KW-0547">Nucleotide-binding</keyword>
<keyword id="KW-0648">Protein biosynthesis</keyword>
<sequence length="592" mass="66266">MKHQVAEILSKVIDQFKQEGVLDASFQPRVNVENTRDKSHGDFATNLAMMLTKVVGKPPREVAEMIVARLPESDVIEKVEIAGPGFINFFVLDVAKFDVLPSILEAGETFGECNVGQGRSVLVEYVSANPTGPLHVGHGRGAAYGASVASLLSKAGFRVSREYYVNDAGRQMDILAASTWLRYLQHCGEELTFPSNGYKGDYIFDIAQSLYEEKGDALRKPAENVFEGVADDEVTTADGETLGDKEKHIDDLIEKTKVLLGDEHYRVVFDKALDAILGDIREDLAEFGVEFENWFSERSLMDSGVIDAALEKLQAAGKIYEKKGALWFKSSEYGDEKDRVVVRENGLKTYFASDIAYHFNKLERGFDVLIDIWGSDHHGYVPRVKAAMQALDTNPEALEVLLVQFAVLYRGGEKLAMSTRSGQFVTLRELRDEVGADAARFFYVQRKSEQHMDFDLDLAKSKSNENPVYYIQYAHARICQVLSLAEERGYQLDTEMGLANLNRLTQEPEADLATLLAKYPEIIARAALAYEPHQIAYYLKELAHGLHAYYNSTQFIVEYEPLRNARLTLVVAVRQVLQNGLKLLSVAAPEKM</sequence>
<accession>Q31J79</accession>
<reference key="1">
    <citation type="journal article" date="2006" name="PLoS Biol.">
        <title>The genome of deep-sea vent chemolithoautotroph Thiomicrospira crunogena XCL-2.</title>
        <authorList>
            <person name="Scott K.M."/>
            <person name="Sievert S.M."/>
            <person name="Abril F.N."/>
            <person name="Ball L.A."/>
            <person name="Barrett C.J."/>
            <person name="Blake R.A."/>
            <person name="Boller A.J."/>
            <person name="Chain P.S.G."/>
            <person name="Clark J.A."/>
            <person name="Davis C.R."/>
            <person name="Detter C."/>
            <person name="Do K.F."/>
            <person name="Dobrinski K.P."/>
            <person name="Faza B.I."/>
            <person name="Fitzpatrick K.A."/>
            <person name="Freyermuth S.K."/>
            <person name="Harmer T.L."/>
            <person name="Hauser L.J."/>
            <person name="Huegler M."/>
            <person name="Kerfeld C.A."/>
            <person name="Klotz M.G."/>
            <person name="Kong W.W."/>
            <person name="Land M."/>
            <person name="Lapidus A."/>
            <person name="Larimer F.W."/>
            <person name="Longo D.L."/>
            <person name="Lucas S."/>
            <person name="Malfatti S.A."/>
            <person name="Massey S.E."/>
            <person name="Martin D.D."/>
            <person name="McCuddin Z."/>
            <person name="Meyer F."/>
            <person name="Moore J.L."/>
            <person name="Ocampo L.H. Jr."/>
            <person name="Paul J.H."/>
            <person name="Paulsen I.T."/>
            <person name="Reep D.K."/>
            <person name="Ren Q."/>
            <person name="Ross R.L."/>
            <person name="Sato P.Y."/>
            <person name="Thomas P."/>
            <person name="Tinkham L.E."/>
            <person name="Zeruth G.T."/>
        </authorList>
    </citation>
    <scope>NUCLEOTIDE SEQUENCE [LARGE SCALE GENOMIC DNA]</scope>
    <source>
        <strain>DSM 25203 / XCL-2</strain>
    </source>
</reference>
<gene>
    <name evidence="1" type="primary">argS</name>
    <name type="ordered locus">Tcr_0198</name>
</gene>
<protein>
    <recommendedName>
        <fullName evidence="1">Arginine--tRNA ligase</fullName>
        <ecNumber evidence="1">6.1.1.19</ecNumber>
    </recommendedName>
    <alternativeName>
        <fullName evidence="1">Arginyl-tRNA synthetase</fullName>
        <shortName evidence="1">ArgRS</shortName>
    </alternativeName>
</protein>